<evidence type="ECO:0000255" key="1">
    <source>
        <dbReference type="HAMAP-Rule" id="MF_01595"/>
    </source>
</evidence>
<evidence type="ECO:0000256" key="2">
    <source>
        <dbReference type="SAM" id="MobiDB-lite"/>
    </source>
</evidence>
<proteinExistence type="inferred from homology"/>
<name>PNP_ECOHS</name>
<gene>
    <name evidence="1" type="primary">pnp</name>
    <name type="ordered locus">EcHS_A3356</name>
</gene>
<sequence>MLNPIVRKFQYGQHTVTLETGMMARQATAAVMVSMDDTAVFVTVVGQKKAKPGQDFFPLTVNYQERTYAAGRIPGSFFRREGRPSEGETLIARLIDRPIRPLFPEGFVNEVQVIATVVSVNPQVNPDIVAMIGASAALSLSGIPFNGPIGAARVGYINDQYVLNPTQDELKESKLDLVVAGTEAAVLMVESEAQLLSEDQMLGAVVFGHEQQQVVIQNINELVKEAGKPRWDWQPEPVNEALNARVAALAEARLSDAYRITDKQERYAQVDVIKSETIATLLAEDETLDENELGEILHAIEKNVVRSRVLAGEPRIDGREKDMIRGLDVRTGVLPRTHGSALFTRGETQALVTATLGTARDAQVLDELMGERTDTFLFHYNFPPYSVGETGMVGSPKRREIGHGRLAKRGVLAVMPDMDKFPYTVRVVSEITESNGSSSMASVCGASLALMDAGVPIKAAVAGIAMGLVKEGDNYVVLSDILGDEDHLGDMDFKVAGSRDGISALQMDIKIEGITKEIMQVALNQAKGARLHILGVMEQAINAPRGDISEFAPRIHTIKINPDKIKDVIGKGGSVIRALTEETGTTIEIEDDGTVKIAATDGEKAKHAIRRIEEITAEIEVGRVYTGKVTRIVDFGAFVAIGGGKEGLVHISQIADKRVEKVTDYLQMGQEVPVKVLEVDRQGRIRLSIKEATEQSQPAAAPEAPAAEQGE</sequence>
<protein>
    <recommendedName>
        <fullName evidence="1">Polyribonucleotide nucleotidyltransferase</fullName>
        <ecNumber evidence="1">2.7.7.8</ecNumber>
    </recommendedName>
    <alternativeName>
        <fullName evidence="1">Polynucleotide phosphorylase</fullName>
        <shortName evidence="1">PNPase</shortName>
    </alternativeName>
</protein>
<dbReference type="EC" id="2.7.7.8" evidence="1"/>
<dbReference type="EMBL" id="CP000802">
    <property type="protein sequence ID" value="ABV07584.1"/>
    <property type="molecule type" value="Genomic_DNA"/>
</dbReference>
<dbReference type="RefSeq" id="WP_001295554.1">
    <property type="nucleotide sequence ID" value="NC_009800.1"/>
</dbReference>
<dbReference type="SMR" id="A8A4Y0"/>
<dbReference type="KEGG" id="ecx:EcHS_A3356"/>
<dbReference type="HOGENOM" id="CLU_004217_2_2_6"/>
<dbReference type="GO" id="GO:0005829">
    <property type="term" value="C:cytosol"/>
    <property type="evidence" value="ECO:0007669"/>
    <property type="project" value="TreeGrafter"/>
</dbReference>
<dbReference type="GO" id="GO:0000175">
    <property type="term" value="F:3'-5'-RNA exonuclease activity"/>
    <property type="evidence" value="ECO:0007669"/>
    <property type="project" value="TreeGrafter"/>
</dbReference>
<dbReference type="GO" id="GO:0000287">
    <property type="term" value="F:magnesium ion binding"/>
    <property type="evidence" value="ECO:0007669"/>
    <property type="project" value="UniProtKB-UniRule"/>
</dbReference>
<dbReference type="GO" id="GO:0004654">
    <property type="term" value="F:polyribonucleotide nucleotidyltransferase activity"/>
    <property type="evidence" value="ECO:0007669"/>
    <property type="project" value="UniProtKB-UniRule"/>
</dbReference>
<dbReference type="GO" id="GO:0003723">
    <property type="term" value="F:RNA binding"/>
    <property type="evidence" value="ECO:0007669"/>
    <property type="project" value="UniProtKB-UniRule"/>
</dbReference>
<dbReference type="GO" id="GO:0006402">
    <property type="term" value="P:mRNA catabolic process"/>
    <property type="evidence" value="ECO:0007669"/>
    <property type="project" value="UniProtKB-UniRule"/>
</dbReference>
<dbReference type="GO" id="GO:0006396">
    <property type="term" value="P:RNA processing"/>
    <property type="evidence" value="ECO:0007669"/>
    <property type="project" value="InterPro"/>
</dbReference>
<dbReference type="CDD" id="cd02393">
    <property type="entry name" value="KH-I_PNPase"/>
    <property type="match status" value="1"/>
</dbReference>
<dbReference type="CDD" id="cd11363">
    <property type="entry name" value="RNase_PH_PNPase_1"/>
    <property type="match status" value="1"/>
</dbReference>
<dbReference type="CDD" id="cd11364">
    <property type="entry name" value="RNase_PH_PNPase_2"/>
    <property type="match status" value="1"/>
</dbReference>
<dbReference type="CDD" id="cd04472">
    <property type="entry name" value="S1_PNPase"/>
    <property type="match status" value="1"/>
</dbReference>
<dbReference type="FunFam" id="2.40.50.140:FF:000023">
    <property type="entry name" value="Polyribonucleotide nucleotidyltransferase"/>
    <property type="match status" value="1"/>
</dbReference>
<dbReference type="FunFam" id="3.30.1370.10:FF:000001">
    <property type="entry name" value="Polyribonucleotide nucleotidyltransferase"/>
    <property type="match status" value="1"/>
</dbReference>
<dbReference type="FunFam" id="3.30.230.70:FF:000001">
    <property type="entry name" value="Polyribonucleotide nucleotidyltransferase"/>
    <property type="match status" value="1"/>
</dbReference>
<dbReference type="FunFam" id="3.30.230.70:FF:000002">
    <property type="entry name" value="Polyribonucleotide nucleotidyltransferase"/>
    <property type="match status" value="1"/>
</dbReference>
<dbReference type="Gene3D" id="3.30.230.70">
    <property type="entry name" value="GHMP Kinase, N-terminal domain"/>
    <property type="match status" value="2"/>
</dbReference>
<dbReference type="Gene3D" id="3.30.1370.10">
    <property type="entry name" value="K Homology domain, type 1"/>
    <property type="match status" value="1"/>
</dbReference>
<dbReference type="Gene3D" id="2.40.50.140">
    <property type="entry name" value="Nucleic acid-binding proteins"/>
    <property type="match status" value="1"/>
</dbReference>
<dbReference type="HAMAP" id="MF_01595">
    <property type="entry name" value="PNPase"/>
    <property type="match status" value="1"/>
</dbReference>
<dbReference type="InterPro" id="IPR001247">
    <property type="entry name" value="ExoRNase_PH_dom1"/>
</dbReference>
<dbReference type="InterPro" id="IPR015847">
    <property type="entry name" value="ExoRNase_PH_dom2"/>
</dbReference>
<dbReference type="InterPro" id="IPR036345">
    <property type="entry name" value="ExoRNase_PH_dom2_sf"/>
</dbReference>
<dbReference type="InterPro" id="IPR004087">
    <property type="entry name" value="KH_dom"/>
</dbReference>
<dbReference type="InterPro" id="IPR004088">
    <property type="entry name" value="KH_dom_type_1"/>
</dbReference>
<dbReference type="InterPro" id="IPR036612">
    <property type="entry name" value="KH_dom_type_1_sf"/>
</dbReference>
<dbReference type="InterPro" id="IPR012340">
    <property type="entry name" value="NA-bd_OB-fold"/>
</dbReference>
<dbReference type="InterPro" id="IPR012162">
    <property type="entry name" value="PNPase"/>
</dbReference>
<dbReference type="InterPro" id="IPR027408">
    <property type="entry name" value="PNPase/RNase_PH_dom_sf"/>
</dbReference>
<dbReference type="InterPro" id="IPR015848">
    <property type="entry name" value="PNPase_PH_RNA-bd_bac/org-type"/>
</dbReference>
<dbReference type="InterPro" id="IPR036456">
    <property type="entry name" value="PNPase_PH_RNA-bd_sf"/>
</dbReference>
<dbReference type="InterPro" id="IPR020568">
    <property type="entry name" value="Ribosomal_Su5_D2-typ_SF"/>
</dbReference>
<dbReference type="InterPro" id="IPR003029">
    <property type="entry name" value="S1_domain"/>
</dbReference>
<dbReference type="NCBIfam" id="TIGR03591">
    <property type="entry name" value="polynuc_phos"/>
    <property type="match status" value="1"/>
</dbReference>
<dbReference type="NCBIfam" id="NF008805">
    <property type="entry name" value="PRK11824.1"/>
    <property type="match status" value="1"/>
</dbReference>
<dbReference type="PANTHER" id="PTHR11252">
    <property type="entry name" value="POLYRIBONUCLEOTIDE NUCLEOTIDYLTRANSFERASE"/>
    <property type="match status" value="1"/>
</dbReference>
<dbReference type="PANTHER" id="PTHR11252:SF0">
    <property type="entry name" value="POLYRIBONUCLEOTIDE NUCLEOTIDYLTRANSFERASE 1, MITOCHONDRIAL"/>
    <property type="match status" value="1"/>
</dbReference>
<dbReference type="Pfam" id="PF00013">
    <property type="entry name" value="KH_1"/>
    <property type="match status" value="1"/>
</dbReference>
<dbReference type="Pfam" id="PF03726">
    <property type="entry name" value="PNPase"/>
    <property type="match status" value="1"/>
</dbReference>
<dbReference type="Pfam" id="PF01138">
    <property type="entry name" value="RNase_PH"/>
    <property type="match status" value="2"/>
</dbReference>
<dbReference type="Pfam" id="PF03725">
    <property type="entry name" value="RNase_PH_C"/>
    <property type="match status" value="2"/>
</dbReference>
<dbReference type="Pfam" id="PF00575">
    <property type="entry name" value="S1"/>
    <property type="match status" value="1"/>
</dbReference>
<dbReference type="PIRSF" id="PIRSF005499">
    <property type="entry name" value="PNPase"/>
    <property type="match status" value="1"/>
</dbReference>
<dbReference type="SMART" id="SM00322">
    <property type="entry name" value="KH"/>
    <property type="match status" value="1"/>
</dbReference>
<dbReference type="SMART" id="SM00316">
    <property type="entry name" value="S1"/>
    <property type="match status" value="1"/>
</dbReference>
<dbReference type="SUPFAM" id="SSF54791">
    <property type="entry name" value="Eukaryotic type KH-domain (KH-domain type I)"/>
    <property type="match status" value="1"/>
</dbReference>
<dbReference type="SUPFAM" id="SSF50249">
    <property type="entry name" value="Nucleic acid-binding proteins"/>
    <property type="match status" value="1"/>
</dbReference>
<dbReference type="SUPFAM" id="SSF46915">
    <property type="entry name" value="Polynucleotide phosphorylase/guanosine pentaphosphate synthase (PNPase/GPSI), domain 3"/>
    <property type="match status" value="1"/>
</dbReference>
<dbReference type="SUPFAM" id="SSF55666">
    <property type="entry name" value="Ribonuclease PH domain 2-like"/>
    <property type="match status" value="2"/>
</dbReference>
<dbReference type="SUPFAM" id="SSF54211">
    <property type="entry name" value="Ribosomal protein S5 domain 2-like"/>
    <property type="match status" value="2"/>
</dbReference>
<dbReference type="PROSITE" id="PS50084">
    <property type="entry name" value="KH_TYPE_1"/>
    <property type="match status" value="1"/>
</dbReference>
<dbReference type="PROSITE" id="PS50126">
    <property type="entry name" value="S1"/>
    <property type="match status" value="1"/>
</dbReference>
<feature type="chain" id="PRO_0000329645" description="Polyribonucleotide nucleotidyltransferase">
    <location>
        <begin position="1"/>
        <end position="711"/>
    </location>
</feature>
<feature type="domain" description="KH" evidence="1">
    <location>
        <begin position="553"/>
        <end position="612"/>
    </location>
</feature>
<feature type="domain" description="S1 motif" evidence="1">
    <location>
        <begin position="622"/>
        <end position="690"/>
    </location>
</feature>
<feature type="region of interest" description="Disordered" evidence="2">
    <location>
        <begin position="689"/>
        <end position="711"/>
    </location>
</feature>
<feature type="compositionally biased region" description="Low complexity" evidence="2">
    <location>
        <begin position="694"/>
        <end position="711"/>
    </location>
</feature>
<feature type="binding site" evidence="1">
    <location>
        <position position="486"/>
    </location>
    <ligand>
        <name>Mg(2+)</name>
        <dbReference type="ChEBI" id="CHEBI:18420"/>
    </ligand>
</feature>
<feature type="binding site" evidence="1">
    <location>
        <position position="492"/>
    </location>
    <ligand>
        <name>Mg(2+)</name>
        <dbReference type="ChEBI" id="CHEBI:18420"/>
    </ligand>
</feature>
<accession>A8A4Y0</accession>
<comment type="function">
    <text evidence="1">Involved in mRNA degradation. Catalyzes the phosphorolysis of single-stranded polyribonucleotides processively in the 3'- to 5'-direction.</text>
</comment>
<comment type="catalytic activity">
    <reaction evidence="1">
        <text>RNA(n+1) + phosphate = RNA(n) + a ribonucleoside 5'-diphosphate</text>
        <dbReference type="Rhea" id="RHEA:22096"/>
        <dbReference type="Rhea" id="RHEA-COMP:14527"/>
        <dbReference type="Rhea" id="RHEA-COMP:17342"/>
        <dbReference type="ChEBI" id="CHEBI:43474"/>
        <dbReference type="ChEBI" id="CHEBI:57930"/>
        <dbReference type="ChEBI" id="CHEBI:140395"/>
        <dbReference type="EC" id="2.7.7.8"/>
    </reaction>
</comment>
<comment type="cofactor">
    <cofactor evidence="1">
        <name>Mg(2+)</name>
        <dbReference type="ChEBI" id="CHEBI:18420"/>
    </cofactor>
</comment>
<comment type="subunit">
    <text evidence="1">Component of the RNA degradosome, which is a multiprotein complex involved in RNA processing and mRNA degradation.</text>
</comment>
<comment type="subcellular location">
    <subcellularLocation>
        <location evidence="1">Cytoplasm</location>
    </subcellularLocation>
</comment>
<comment type="similarity">
    <text evidence="1">Belongs to the polyribonucleotide nucleotidyltransferase family.</text>
</comment>
<reference key="1">
    <citation type="journal article" date="2008" name="J. Bacteriol.">
        <title>The pangenome structure of Escherichia coli: comparative genomic analysis of E. coli commensal and pathogenic isolates.</title>
        <authorList>
            <person name="Rasko D.A."/>
            <person name="Rosovitz M.J."/>
            <person name="Myers G.S.A."/>
            <person name="Mongodin E.F."/>
            <person name="Fricke W.F."/>
            <person name="Gajer P."/>
            <person name="Crabtree J."/>
            <person name="Sebaihia M."/>
            <person name="Thomson N.R."/>
            <person name="Chaudhuri R."/>
            <person name="Henderson I.R."/>
            <person name="Sperandio V."/>
            <person name="Ravel J."/>
        </authorList>
    </citation>
    <scope>NUCLEOTIDE SEQUENCE [LARGE SCALE GENOMIC DNA]</scope>
    <source>
        <strain>HS</strain>
    </source>
</reference>
<keyword id="KW-0963">Cytoplasm</keyword>
<keyword id="KW-0460">Magnesium</keyword>
<keyword id="KW-0479">Metal-binding</keyword>
<keyword id="KW-0548">Nucleotidyltransferase</keyword>
<keyword id="KW-0694">RNA-binding</keyword>
<keyword id="KW-0808">Transferase</keyword>
<organism>
    <name type="scientific">Escherichia coli O9:H4 (strain HS)</name>
    <dbReference type="NCBI Taxonomy" id="331112"/>
    <lineage>
        <taxon>Bacteria</taxon>
        <taxon>Pseudomonadati</taxon>
        <taxon>Pseudomonadota</taxon>
        <taxon>Gammaproteobacteria</taxon>
        <taxon>Enterobacterales</taxon>
        <taxon>Enterobacteriaceae</taxon>
        <taxon>Escherichia</taxon>
    </lineage>
</organism>